<dbReference type="EMBL" id="Z73538">
    <property type="protein sequence ID" value="CAA97890.1"/>
    <property type="molecule type" value="Genomic_DNA"/>
</dbReference>
<dbReference type="EMBL" id="AY693321">
    <property type="protein sequence ID" value="AAT93340.1"/>
    <property type="molecule type" value="Genomic_DNA"/>
</dbReference>
<dbReference type="PIR" id="S65194">
    <property type="entry name" value="S65194"/>
</dbReference>
<dbReference type="IntAct" id="Q08922">
    <property type="interactions" value="1"/>
</dbReference>
<dbReference type="STRING" id="4932.YPL182C"/>
<dbReference type="PaxDb" id="4932-YPL182C"/>
<dbReference type="EnsemblFungi" id="YPL182C_mRNA">
    <property type="protein sequence ID" value="YPL182C"/>
    <property type="gene ID" value="YPL182C"/>
</dbReference>
<dbReference type="AGR" id="SGD:S000006103"/>
<dbReference type="SGD" id="S000006103">
    <property type="gene designation" value="YPL182C"/>
</dbReference>
<dbReference type="HOGENOM" id="CLU_1972194_0_0_1"/>
<dbReference type="GO" id="GO:0016020">
    <property type="term" value="C:membrane"/>
    <property type="evidence" value="ECO:0007669"/>
    <property type="project" value="UniProtKB-SubCell"/>
</dbReference>
<accession>Q08922</accession>
<protein>
    <recommendedName>
        <fullName>Putative uncharacterized protein YPL182C</fullName>
    </recommendedName>
</protein>
<keyword id="KW-0472">Membrane</keyword>
<keyword id="KW-0812">Transmembrane</keyword>
<keyword id="KW-1133">Transmembrane helix</keyword>
<evidence type="ECO:0000255" key="1"/>
<evidence type="ECO:0000256" key="2">
    <source>
        <dbReference type="SAM" id="MobiDB-lite"/>
    </source>
</evidence>
<evidence type="ECO:0000305" key="3"/>
<evidence type="ECO:0000305" key="4">
    <source>
    </source>
</evidence>
<feature type="chain" id="PRO_0000299806" description="Putative uncharacterized protein YPL182C">
    <location>
        <begin position="1"/>
        <end position="127"/>
    </location>
</feature>
<feature type="transmembrane region" description="Helical" evidence="1">
    <location>
        <begin position="47"/>
        <end position="67"/>
    </location>
</feature>
<feature type="transmembrane region" description="Helical" evidence="1">
    <location>
        <begin position="84"/>
        <end position="104"/>
    </location>
</feature>
<feature type="region of interest" description="Disordered" evidence="2">
    <location>
        <begin position="1"/>
        <end position="34"/>
    </location>
</feature>
<feature type="compositionally biased region" description="Low complexity" evidence="2">
    <location>
        <begin position="9"/>
        <end position="34"/>
    </location>
</feature>
<proteinExistence type="uncertain"/>
<name>YP182_YEAST</name>
<comment type="subcellular location">
    <subcellularLocation>
        <location evidence="3">Membrane</location>
        <topology evidence="3">Multi-pass membrane protein</topology>
    </subcellularLocation>
</comment>
<comment type="miscellaneous">
    <text evidence="3">Partially overlaps CTI6.</text>
</comment>
<comment type="caution">
    <text evidence="4">Product of a dubious gene prediction unlikely to encode a functional protein. Because of that it is not part of the S.cerevisiae S288c complete/reference proteome set.</text>
</comment>
<organism>
    <name type="scientific">Saccharomyces cerevisiae (strain ATCC 204508 / S288c)</name>
    <name type="common">Baker's yeast</name>
    <dbReference type="NCBI Taxonomy" id="559292"/>
    <lineage>
        <taxon>Eukaryota</taxon>
        <taxon>Fungi</taxon>
        <taxon>Dikarya</taxon>
        <taxon>Ascomycota</taxon>
        <taxon>Saccharomycotina</taxon>
        <taxon>Saccharomycetes</taxon>
        <taxon>Saccharomycetales</taxon>
        <taxon>Saccharomycetaceae</taxon>
        <taxon>Saccharomyces</taxon>
    </lineage>
</organism>
<sequence length="127" mass="13208">MKNPESSGVSSSPQIQRVSPSSSSTSPSPPSIGTSSCFTLSSCTLPIAAVVVAVDVVDIMSVDPLAMTSAFSISSLPTTGPLGTIAVDSITLLYTPICLCYLLVRLRKVNFEGNKLLMVSVVNFVPL</sequence>
<reference key="1">
    <citation type="journal article" date="1997" name="Nature">
        <title>The nucleotide sequence of Saccharomyces cerevisiae chromosome XVI.</title>
        <authorList>
            <person name="Bussey H."/>
            <person name="Storms R.K."/>
            <person name="Ahmed A."/>
            <person name="Albermann K."/>
            <person name="Allen E."/>
            <person name="Ansorge W."/>
            <person name="Araujo R."/>
            <person name="Aparicio A."/>
            <person name="Barrell B.G."/>
            <person name="Badcock K."/>
            <person name="Benes V."/>
            <person name="Botstein D."/>
            <person name="Bowman S."/>
            <person name="Brueckner M."/>
            <person name="Carpenter J."/>
            <person name="Cherry J.M."/>
            <person name="Chung E."/>
            <person name="Churcher C.M."/>
            <person name="Coster F."/>
            <person name="Davis K."/>
            <person name="Davis R.W."/>
            <person name="Dietrich F.S."/>
            <person name="Delius H."/>
            <person name="DiPaolo T."/>
            <person name="Dubois E."/>
            <person name="Duesterhoeft A."/>
            <person name="Duncan M."/>
            <person name="Floeth M."/>
            <person name="Fortin N."/>
            <person name="Friesen J.D."/>
            <person name="Fritz C."/>
            <person name="Goffeau A."/>
            <person name="Hall J."/>
            <person name="Hebling U."/>
            <person name="Heumann K."/>
            <person name="Hilbert H."/>
            <person name="Hillier L.W."/>
            <person name="Hunicke-Smith S."/>
            <person name="Hyman R.W."/>
            <person name="Johnston M."/>
            <person name="Kalman S."/>
            <person name="Kleine K."/>
            <person name="Komp C."/>
            <person name="Kurdi O."/>
            <person name="Lashkari D."/>
            <person name="Lew H."/>
            <person name="Lin A."/>
            <person name="Lin D."/>
            <person name="Louis E.J."/>
            <person name="Marathe R."/>
            <person name="Messenguy F."/>
            <person name="Mewes H.-W."/>
            <person name="Mirtipati S."/>
            <person name="Moestl D."/>
            <person name="Mueller-Auer S."/>
            <person name="Namath A."/>
            <person name="Nentwich U."/>
            <person name="Oefner P."/>
            <person name="Pearson D."/>
            <person name="Petel F.X."/>
            <person name="Pohl T.M."/>
            <person name="Purnelle B."/>
            <person name="Rajandream M.A."/>
            <person name="Rechmann S."/>
            <person name="Rieger M."/>
            <person name="Riles L."/>
            <person name="Roberts D."/>
            <person name="Schaefer M."/>
            <person name="Scharfe M."/>
            <person name="Scherens B."/>
            <person name="Schramm S."/>
            <person name="Schroeder M."/>
            <person name="Sdicu A.-M."/>
            <person name="Tettelin H."/>
            <person name="Urrestarazu L.A."/>
            <person name="Ushinsky S."/>
            <person name="Vierendeels F."/>
            <person name="Vissers S."/>
            <person name="Voss H."/>
            <person name="Walsh S.V."/>
            <person name="Wambutt R."/>
            <person name="Wang Y."/>
            <person name="Wedler E."/>
            <person name="Wedler H."/>
            <person name="Winnett E."/>
            <person name="Zhong W.-W."/>
            <person name="Zollner A."/>
            <person name="Vo D.H."/>
            <person name="Hani J."/>
        </authorList>
    </citation>
    <scope>NUCLEOTIDE SEQUENCE [LARGE SCALE GENOMIC DNA]</scope>
    <source>
        <strain>ATCC 204508 / S288c</strain>
    </source>
</reference>
<reference key="2">
    <citation type="journal article" date="2014" name="G3 (Bethesda)">
        <title>The reference genome sequence of Saccharomyces cerevisiae: Then and now.</title>
        <authorList>
            <person name="Engel S.R."/>
            <person name="Dietrich F.S."/>
            <person name="Fisk D.G."/>
            <person name="Binkley G."/>
            <person name="Balakrishnan R."/>
            <person name="Costanzo M.C."/>
            <person name="Dwight S.S."/>
            <person name="Hitz B.C."/>
            <person name="Karra K."/>
            <person name="Nash R.S."/>
            <person name="Weng S."/>
            <person name="Wong E.D."/>
            <person name="Lloyd P."/>
            <person name="Skrzypek M.S."/>
            <person name="Miyasato S.R."/>
            <person name="Simison M."/>
            <person name="Cherry J.M."/>
        </authorList>
    </citation>
    <scope>GENOME REANNOTATION</scope>
    <source>
        <strain>ATCC 204508 / S288c</strain>
    </source>
</reference>
<reference key="3">
    <citation type="journal article" date="2007" name="Genome Res.">
        <title>Approaching a complete repository of sequence-verified protein-encoding clones for Saccharomyces cerevisiae.</title>
        <authorList>
            <person name="Hu Y."/>
            <person name="Rolfs A."/>
            <person name="Bhullar B."/>
            <person name="Murthy T.V.S."/>
            <person name="Zhu C."/>
            <person name="Berger M.F."/>
            <person name="Camargo A.A."/>
            <person name="Kelley F."/>
            <person name="McCarron S."/>
            <person name="Jepson D."/>
            <person name="Richardson A."/>
            <person name="Raphael J."/>
            <person name="Moreira D."/>
            <person name="Taycher E."/>
            <person name="Zuo D."/>
            <person name="Mohr S."/>
            <person name="Kane M.F."/>
            <person name="Williamson J."/>
            <person name="Simpson A.J.G."/>
            <person name="Bulyk M.L."/>
            <person name="Harlow E."/>
            <person name="Marsischky G."/>
            <person name="Kolodner R.D."/>
            <person name="LaBaer J."/>
        </authorList>
    </citation>
    <scope>NUCLEOTIDE SEQUENCE [GENOMIC DNA]</scope>
    <source>
        <strain>ATCC 204508 / S288c</strain>
    </source>
</reference>
<gene>
    <name type="ordered locus">YPL182C</name>
    <name type="ORF">P2235</name>
</gene>